<dbReference type="EMBL" id="AJ938070">
    <property type="protein sequence ID" value="CAI79405.1"/>
    <property type="molecule type" value="mRNA"/>
</dbReference>
<dbReference type="EMBL" id="CM000129">
    <property type="protein sequence ID" value="EEC77348.1"/>
    <property type="molecule type" value="Genomic_DNA"/>
</dbReference>
<dbReference type="SMR" id="Q4GZL0"/>
<dbReference type="STRING" id="39946.Q4GZL0"/>
<dbReference type="EnsemblPlants" id="BGIOSGA015027-TA">
    <property type="protein sequence ID" value="BGIOSGA015027-PA"/>
    <property type="gene ID" value="BGIOSGA015027"/>
</dbReference>
<dbReference type="Gramene" id="BGIOSGA015027-TA">
    <property type="protein sequence ID" value="BGIOSGA015027-PA"/>
    <property type="gene ID" value="BGIOSGA015027"/>
</dbReference>
<dbReference type="HOGENOM" id="CLU_000445_69_5_1"/>
<dbReference type="OMA" id="KCSPANT"/>
<dbReference type="Proteomes" id="UP000007015">
    <property type="component" value="Chromosome 4"/>
</dbReference>
<dbReference type="GO" id="GO:0048830">
    <property type="term" value="P:adventitious root development"/>
    <property type="evidence" value="ECO:0007669"/>
    <property type="project" value="EnsemblPlants"/>
</dbReference>
<dbReference type="GO" id="GO:0009736">
    <property type="term" value="P:cytokinin-activated signaling pathway"/>
    <property type="evidence" value="ECO:0007669"/>
    <property type="project" value="UniProtKB-KW"/>
</dbReference>
<dbReference type="GO" id="GO:0000160">
    <property type="term" value="P:phosphorelay signal transduction system"/>
    <property type="evidence" value="ECO:0007669"/>
    <property type="project" value="UniProtKB-KW"/>
</dbReference>
<dbReference type="GO" id="GO:0009735">
    <property type="term" value="P:response to cytokinin"/>
    <property type="evidence" value="ECO:0000305"/>
    <property type="project" value="Gramene"/>
</dbReference>
<dbReference type="CDD" id="cd17581">
    <property type="entry name" value="REC_typeA_ARR"/>
    <property type="match status" value="1"/>
</dbReference>
<dbReference type="Gene3D" id="3.40.50.2300">
    <property type="match status" value="1"/>
</dbReference>
<dbReference type="InterPro" id="IPR045279">
    <property type="entry name" value="ARR-like"/>
</dbReference>
<dbReference type="InterPro" id="IPR011006">
    <property type="entry name" value="CheY-like_superfamily"/>
</dbReference>
<dbReference type="InterPro" id="IPR001789">
    <property type="entry name" value="Sig_transdc_resp-reg_receiver"/>
</dbReference>
<dbReference type="PANTHER" id="PTHR43874">
    <property type="entry name" value="TWO-COMPONENT RESPONSE REGULATOR"/>
    <property type="match status" value="1"/>
</dbReference>
<dbReference type="PANTHER" id="PTHR43874:SF28">
    <property type="entry name" value="TWO-COMPONENT RESPONSE REGULATOR ORR1"/>
    <property type="match status" value="1"/>
</dbReference>
<dbReference type="Pfam" id="PF00072">
    <property type="entry name" value="Response_reg"/>
    <property type="match status" value="1"/>
</dbReference>
<dbReference type="SMART" id="SM00448">
    <property type="entry name" value="REC"/>
    <property type="match status" value="1"/>
</dbReference>
<dbReference type="SUPFAM" id="SSF52172">
    <property type="entry name" value="CheY-like"/>
    <property type="match status" value="1"/>
</dbReference>
<dbReference type="PROSITE" id="PS50110">
    <property type="entry name" value="RESPONSE_REGULATORY"/>
    <property type="match status" value="1"/>
</dbReference>
<proteinExistence type="evidence at transcript level"/>
<reference key="1">
    <citation type="journal article" date="2006" name="BMC Plant Biol.">
        <title>Molecular characterization and differential expression of cytokinin-responsive type-A response regulators in rice (Oryza sativa).</title>
        <authorList>
            <person name="Jain M."/>
            <person name="Tyagi A.K."/>
            <person name="Khurana J.P."/>
        </authorList>
    </citation>
    <scope>NUCLEOTIDE SEQUENCE [MRNA]</scope>
    <scope>TISSUE SPECIFICITY</scope>
    <scope>INDUCTION BY CYTOKININ</scope>
    <source>
        <strain>cv. Pusa Basmati</strain>
    </source>
</reference>
<reference key="2">
    <citation type="journal article" date="2005" name="PLoS Biol.">
        <title>The genomes of Oryza sativa: a history of duplications.</title>
        <authorList>
            <person name="Yu J."/>
            <person name="Wang J."/>
            <person name="Lin W."/>
            <person name="Li S."/>
            <person name="Li H."/>
            <person name="Zhou J."/>
            <person name="Ni P."/>
            <person name="Dong W."/>
            <person name="Hu S."/>
            <person name="Zeng C."/>
            <person name="Zhang J."/>
            <person name="Zhang Y."/>
            <person name="Li R."/>
            <person name="Xu Z."/>
            <person name="Li S."/>
            <person name="Li X."/>
            <person name="Zheng H."/>
            <person name="Cong L."/>
            <person name="Lin L."/>
            <person name="Yin J."/>
            <person name="Geng J."/>
            <person name="Li G."/>
            <person name="Shi J."/>
            <person name="Liu J."/>
            <person name="Lv H."/>
            <person name="Li J."/>
            <person name="Wang J."/>
            <person name="Deng Y."/>
            <person name="Ran L."/>
            <person name="Shi X."/>
            <person name="Wang X."/>
            <person name="Wu Q."/>
            <person name="Li C."/>
            <person name="Ren X."/>
            <person name="Wang J."/>
            <person name="Wang X."/>
            <person name="Li D."/>
            <person name="Liu D."/>
            <person name="Zhang X."/>
            <person name="Ji Z."/>
            <person name="Zhao W."/>
            <person name="Sun Y."/>
            <person name="Zhang Z."/>
            <person name="Bao J."/>
            <person name="Han Y."/>
            <person name="Dong L."/>
            <person name="Ji J."/>
            <person name="Chen P."/>
            <person name="Wu S."/>
            <person name="Liu J."/>
            <person name="Xiao Y."/>
            <person name="Bu D."/>
            <person name="Tan J."/>
            <person name="Yang L."/>
            <person name="Ye C."/>
            <person name="Zhang J."/>
            <person name="Xu J."/>
            <person name="Zhou Y."/>
            <person name="Yu Y."/>
            <person name="Zhang B."/>
            <person name="Zhuang S."/>
            <person name="Wei H."/>
            <person name="Liu B."/>
            <person name="Lei M."/>
            <person name="Yu H."/>
            <person name="Li Y."/>
            <person name="Xu H."/>
            <person name="Wei S."/>
            <person name="He X."/>
            <person name="Fang L."/>
            <person name="Zhang Z."/>
            <person name="Zhang Y."/>
            <person name="Huang X."/>
            <person name="Su Z."/>
            <person name="Tong W."/>
            <person name="Li J."/>
            <person name="Tong Z."/>
            <person name="Li S."/>
            <person name="Ye J."/>
            <person name="Wang L."/>
            <person name="Fang L."/>
            <person name="Lei T."/>
            <person name="Chen C.-S."/>
            <person name="Chen H.-C."/>
            <person name="Xu Z."/>
            <person name="Li H."/>
            <person name="Huang H."/>
            <person name="Zhang F."/>
            <person name="Xu H."/>
            <person name="Li N."/>
            <person name="Zhao C."/>
            <person name="Li S."/>
            <person name="Dong L."/>
            <person name="Huang Y."/>
            <person name="Li L."/>
            <person name="Xi Y."/>
            <person name="Qi Q."/>
            <person name="Li W."/>
            <person name="Zhang B."/>
            <person name="Hu W."/>
            <person name="Zhang Y."/>
            <person name="Tian X."/>
            <person name="Jiao Y."/>
            <person name="Liang X."/>
            <person name="Jin J."/>
            <person name="Gao L."/>
            <person name="Zheng W."/>
            <person name="Hao B."/>
            <person name="Liu S.-M."/>
            <person name="Wang W."/>
            <person name="Yuan L."/>
            <person name="Cao M."/>
            <person name="McDermott J."/>
            <person name="Samudrala R."/>
            <person name="Wang J."/>
            <person name="Wong G.K.-S."/>
            <person name="Yang H."/>
        </authorList>
    </citation>
    <scope>NUCLEOTIDE SEQUENCE [LARGE SCALE GENOMIC DNA]</scope>
    <source>
        <strain>cv. 93-11</strain>
    </source>
</reference>
<gene>
    <name evidence="6" type="primary">RR1</name>
    <name evidence="7" type="ORF">OsI_16028</name>
</gene>
<sequence length="231" mass="25282">MEGGRGVTRVLLVDDSPVDRRVVQLLLSSSACAGSFHVIAVDSAKKAMEFLGLKEEGKEQAIDMVLTDYCMPEMTGYELLKAIKALSPLKPIPVIVMSSENEPQRISRCMNAGAEDFIVKPLQSKDVQRLRKCSPANTQCCDAGSDGKPPLLLLPSDHVVVDATAASPPPPPSRRRAHFAGVAMVLHSSSVELSHYFPFLFKFILLVYAILCLGELLHRWSNGCFLNLWCA</sequence>
<accession>Q4GZL0</accession>
<feature type="chain" id="PRO_0000433817" description="Two-component response regulator ORR1">
    <location>
        <begin position="1"/>
        <end position="231"/>
    </location>
</feature>
<feature type="domain" description="Response regulatory" evidence="2">
    <location>
        <begin position="9"/>
        <end position="135"/>
    </location>
</feature>
<feature type="modified residue" description="4-aspartylphosphate" evidence="2">
    <location>
        <position position="68"/>
    </location>
</feature>
<protein>
    <recommendedName>
        <fullName evidence="5">Two-component response regulator ORR1</fullName>
    </recommendedName>
    <alternativeName>
        <fullName evidence="4">Type A response regulator 1</fullName>
        <shortName evidence="4">OsRR1</shortName>
    </alternativeName>
</protein>
<evidence type="ECO:0000250" key="1">
    <source>
        <dbReference type="UniProtKB" id="Q9ZWS9"/>
    </source>
</evidence>
<evidence type="ECO:0000255" key="2">
    <source>
        <dbReference type="PROSITE-ProRule" id="PRU00169"/>
    </source>
</evidence>
<evidence type="ECO:0000269" key="3">
    <source>
    </source>
</evidence>
<evidence type="ECO:0000303" key="4">
    <source>
    </source>
</evidence>
<evidence type="ECO:0000305" key="5"/>
<evidence type="ECO:0000312" key="6">
    <source>
        <dbReference type="EMBL" id="CAI79405.1"/>
    </source>
</evidence>
<evidence type="ECO:0000312" key="7">
    <source>
        <dbReference type="EMBL" id="EEC77348.1"/>
    </source>
</evidence>
<organism>
    <name type="scientific">Oryza sativa subsp. indica</name>
    <name type="common">Rice</name>
    <dbReference type="NCBI Taxonomy" id="39946"/>
    <lineage>
        <taxon>Eukaryota</taxon>
        <taxon>Viridiplantae</taxon>
        <taxon>Streptophyta</taxon>
        <taxon>Embryophyta</taxon>
        <taxon>Tracheophyta</taxon>
        <taxon>Spermatophyta</taxon>
        <taxon>Magnoliopsida</taxon>
        <taxon>Liliopsida</taxon>
        <taxon>Poales</taxon>
        <taxon>Poaceae</taxon>
        <taxon>BOP clade</taxon>
        <taxon>Oryzoideae</taxon>
        <taxon>Oryzeae</taxon>
        <taxon>Oryzinae</taxon>
        <taxon>Oryza</taxon>
        <taxon>Oryza sativa</taxon>
    </lineage>
</organism>
<comment type="function">
    <text evidence="1">Functions as a response regulator involved in His-to-Asp phosphorelay signal transduction system. Phosphorylation of the Asp residue in the receiver domain activates the ability of the protein to promote the transcription of target genes. Type-A response regulators seem to act as negative regulators of the cytokinin signaling.</text>
</comment>
<comment type="tissue specificity">
    <text evidence="3">Expressed in mature leaves and flowers, and at low levels in roots and shoots.</text>
</comment>
<comment type="induction">
    <text evidence="3">By cytokinin.</text>
</comment>
<comment type="PTM">
    <text evidence="5">Two-component system major event consists of a His-to-Asp phosphorelay between a sensor histidine kinase (HK) and a response regulator (RR). In plants, the His-to-Asp phosphorelay involves an additional intermediate named Histidine-containing phosphotransfer protein (HPt). This multistep phosphorelay consists of a His-Asp-His-Asp sequential transfer of a phosphate group between first a His and an Asp of the HK protein, followed by the transfer to a conserved His of the HPt protein and finally the transfer to an Asp in the receiver domain of the RR protein.</text>
</comment>
<comment type="similarity">
    <text evidence="5">Belongs to the ARR family. Type-A subfamily.</text>
</comment>
<name>ORR1_ORYSI</name>
<keyword id="KW-0932">Cytokinin signaling pathway</keyword>
<keyword id="KW-0597">Phosphoprotein</keyword>
<keyword id="KW-1185">Reference proteome</keyword>
<keyword id="KW-0804">Transcription</keyword>
<keyword id="KW-0805">Transcription regulation</keyword>
<keyword id="KW-0902">Two-component regulatory system</keyword>